<keyword id="KW-1003">Cell membrane</keyword>
<keyword id="KW-0472">Membrane</keyword>
<keyword id="KW-0812">Transmembrane</keyword>
<keyword id="KW-1133">Transmembrane helix</keyword>
<name>Y964_STAA1</name>
<accession>A7X0I5</accession>
<dbReference type="EMBL" id="AP009324">
    <property type="protein sequence ID" value="BAF77847.1"/>
    <property type="molecule type" value="Genomic_DNA"/>
</dbReference>
<dbReference type="RefSeq" id="WP_000902805.1">
    <property type="nucleotide sequence ID" value="NC_009782.1"/>
</dbReference>
<dbReference type="KEGG" id="saw:SAHV_0964"/>
<dbReference type="HOGENOM" id="CLU_146641_2_0_9"/>
<dbReference type="GO" id="GO:0005886">
    <property type="term" value="C:plasma membrane"/>
    <property type="evidence" value="ECO:0007669"/>
    <property type="project" value="UniProtKB-SubCell"/>
</dbReference>
<dbReference type="HAMAP" id="MF_01536">
    <property type="entry name" value="UPF0344"/>
    <property type="match status" value="1"/>
</dbReference>
<dbReference type="InterPro" id="IPR010899">
    <property type="entry name" value="UPF0344"/>
</dbReference>
<dbReference type="NCBIfam" id="NF010195">
    <property type="entry name" value="PRK13673.1-2"/>
    <property type="match status" value="1"/>
</dbReference>
<dbReference type="NCBIfam" id="NF010199">
    <property type="entry name" value="PRK13673.1-6"/>
    <property type="match status" value="1"/>
</dbReference>
<dbReference type="Pfam" id="PF07457">
    <property type="entry name" value="DUF1516"/>
    <property type="match status" value="1"/>
</dbReference>
<sequence length="129" mass="14485">MLHLHILSWVLAIILFIATYLNISKNQGGSPFFKPLHMILRLFMLLTLISGFWILIQSFMNGGANHMLLTLKMLCGVAVVGLMEVSIAKRKRHEQSHKMFWITMALIIITMVLGVILPLGPISKLFGIG</sequence>
<reference key="1">
    <citation type="journal article" date="2008" name="Antimicrob. Agents Chemother.">
        <title>Mutated response regulator graR is responsible for phenotypic conversion of Staphylococcus aureus from heterogeneous vancomycin-intermediate resistance to vancomycin-intermediate resistance.</title>
        <authorList>
            <person name="Neoh H.-M."/>
            <person name="Cui L."/>
            <person name="Yuzawa H."/>
            <person name="Takeuchi F."/>
            <person name="Matsuo M."/>
            <person name="Hiramatsu K."/>
        </authorList>
    </citation>
    <scope>NUCLEOTIDE SEQUENCE [LARGE SCALE GENOMIC DNA]</scope>
    <source>
        <strain>Mu3 / ATCC 700698</strain>
    </source>
</reference>
<proteinExistence type="inferred from homology"/>
<evidence type="ECO:0000255" key="1">
    <source>
        <dbReference type="HAMAP-Rule" id="MF_01536"/>
    </source>
</evidence>
<comment type="subcellular location">
    <subcellularLocation>
        <location evidence="1">Cell membrane</location>
        <topology evidence="1">Multi-pass membrane protein</topology>
    </subcellularLocation>
</comment>
<comment type="similarity">
    <text evidence="1">Belongs to the UPF0344 family.</text>
</comment>
<feature type="chain" id="PRO_1000068721" description="UPF0344 protein SAHV_0964">
    <location>
        <begin position="1"/>
        <end position="129"/>
    </location>
</feature>
<feature type="transmembrane region" description="Helical" evidence="1">
    <location>
        <begin position="1"/>
        <end position="21"/>
    </location>
</feature>
<feature type="transmembrane region" description="Helical" evidence="1">
    <location>
        <begin position="36"/>
        <end position="56"/>
    </location>
</feature>
<feature type="transmembrane region" description="Helical" evidence="1">
    <location>
        <begin position="67"/>
        <end position="87"/>
    </location>
</feature>
<feature type="transmembrane region" description="Helical" evidence="1">
    <location>
        <begin position="99"/>
        <end position="119"/>
    </location>
</feature>
<organism>
    <name type="scientific">Staphylococcus aureus (strain Mu3 / ATCC 700698)</name>
    <dbReference type="NCBI Taxonomy" id="418127"/>
    <lineage>
        <taxon>Bacteria</taxon>
        <taxon>Bacillati</taxon>
        <taxon>Bacillota</taxon>
        <taxon>Bacilli</taxon>
        <taxon>Bacillales</taxon>
        <taxon>Staphylococcaceae</taxon>
        <taxon>Staphylococcus</taxon>
    </lineage>
</organism>
<gene>
    <name type="ordered locus">SAHV_0964</name>
</gene>
<protein>
    <recommendedName>
        <fullName evidence="1">UPF0344 protein SAHV_0964</fullName>
    </recommendedName>
</protein>